<gene>
    <name evidence="1" type="primary">kdsA</name>
    <name type="ordered locus">Pfl01_1120</name>
</gene>
<comment type="catalytic activity">
    <reaction evidence="1">
        <text>D-arabinose 5-phosphate + phosphoenolpyruvate + H2O = 3-deoxy-alpha-D-manno-2-octulosonate-8-phosphate + phosphate</text>
        <dbReference type="Rhea" id="RHEA:14053"/>
        <dbReference type="ChEBI" id="CHEBI:15377"/>
        <dbReference type="ChEBI" id="CHEBI:43474"/>
        <dbReference type="ChEBI" id="CHEBI:57693"/>
        <dbReference type="ChEBI" id="CHEBI:58702"/>
        <dbReference type="ChEBI" id="CHEBI:85985"/>
        <dbReference type="EC" id="2.5.1.55"/>
    </reaction>
</comment>
<comment type="pathway">
    <text evidence="1">Carbohydrate biosynthesis; 3-deoxy-D-manno-octulosonate biosynthesis; 3-deoxy-D-manno-octulosonate from D-ribulose 5-phosphate: step 2/3.</text>
</comment>
<comment type="pathway">
    <text evidence="1">Bacterial outer membrane biogenesis; lipopolysaccharide biosynthesis.</text>
</comment>
<comment type="subcellular location">
    <subcellularLocation>
        <location evidence="1">Cytoplasm</location>
    </subcellularLocation>
</comment>
<comment type="similarity">
    <text evidence="1">Belongs to the KdsA family.</text>
</comment>
<organism>
    <name type="scientific">Pseudomonas fluorescens (strain Pf0-1)</name>
    <dbReference type="NCBI Taxonomy" id="205922"/>
    <lineage>
        <taxon>Bacteria</taxon>
        <taxon>Pseudomonadati</taxon>
        <taxon>Pseudomonadota</taxon>
        <taxon>Gammaproteobacteria</taxon>
        <taxon>Pseudomonadales</taxon>
        <taxon>Pseudomonadaceae</taxon>
        <taxon>Pseudomonas</taxon>
    </lineage>
</organism>
<proteinExistence type="inferred from homology"/>
<evidence type="ECO:0000255" key="1">
    <source>
        <dbReference type="HAMAP-Rule" id="MF_00056"/>
    </source>
</evidence>
<dbReference type="EC" id="2.5.1.55" evidence="1"/>
<dbReference type="EMBL" id="CP000094">
    <property type="protein sequence ID" value="ABA72863.1"/>
    <property type="molecule type" value="Genomic_DNA"/>
</dbReference>
<dbReference type="RefSeq" id="WP_007954807.1">
    <property type="nucleotide sequence ID" value="NC_007492.2"/>
</dbReference>
<dbReference type="SMR" id="Q3KH93"/>
<dbReference type="GeneID" id="93487837"/>
<dbReference type="KEGG" id="pfo:Pfl01_1120"/>
<dbReference type="eggNOG" id="COG2877">
    <property type="taxonomic scope" value="Bacteria"/>
</dbReference>
<dbReference type="HOGENOM" id="CLU_036666_0_0_6"/>
<dbReference type="UniPathway" id="UPA00030"/>
<dbReference type="UniPathway" id="UPA00357">
    <property type="reaction ID" value="UER00474"/>
</dbReference>
<dbReference type="Proteomes" id="UP000002704">
    <property type="component" value="Chromosome"/>
</dbReference>
<dbReference type="GO" id="GO:0005737">
    <property type="term" value="C:cytoplasm"/>
    <property type="evidence" value="ECO:0007669"/>
    <property type="project" value="UniProtKB-SubCell"/>
</dbReference>
<dbReference type="GO" id="GO:0008676">
    <property type="term" value="F:3-deoxy-8-phosphooctulonate synthase activity"/>
    <property type="evidence" value="ECO:0007669"/>
    <property type="project" value="UniProtKB-UniRule"/>
</dbReference>
<dbReference type="GO" id="GO:0019294">
    <property type="term" value="P:keto-3-deoxy-D-manno-octulosonic acid biosynthetic process"/>
    <property type="evidence" value="ECO:0007669"/>
    <property type="project" value="UniProtKB-UniRule"/>
</dbReference>
<dbReference type="FunFam" id="3.20.20.70:FF:000058">
    <property type="entry name" value="2-dehydro-3-deoxyphosphooctonate aldolase"/>
    <property type="match status" value="1"/>
</dbReference>
<dbReference type="Gene3D" id="3.20.20.70">
    <property type="entry name" value="Aldolase class I"/>
    <property type="match status" value="1"/>
</dbReference>
<dbReference type="HAMAP" id="MF_00056">
    <property type="entry name" value="KDO8P_synth"/>
    <property type="match status" value="1"/>
</dbReference>
<dbReference type="InterPro" id="IPR013785">
    <property type="entry name" value="Aldolase_TIM"/>
</dbReference>
<dbReference type="InterPro" id="IPR006218">
    <property type="entry name" value="DAHP1/KDSA"/>
</dbReference>
<dbReference type="InterPro" id="IPR006269">
    <property type="entry name" value="KDO8P_synthase"/>
</dbReference>
<dbReference type="NCBIfam" id="TIGR01362">
    <property type="entry name" value="KDO8P_synth"/>
    <property type="match status" value="1"/>
</dbReference>
<dbReference type="NCBIfam" id="NF003543">
    <property type="entry name" value="PRK05198.1"/>
    <property type="match status" value="1"/>
</dbReference>
<dbReference type="NCBIfam" id="NF009109">
    <property type="entry name" value="PRK12457.1"/>
    <property type="match status" value="1"/>
</dbReference>
<dbReference type="PANTHER" id="PTHR21057">
    <property type="entry name" value="PHOSPHO-2-DEHYDRO-3-DEOXYHEPTONATE ALDOLASE"/>
    <property type="match status" value="1"/>
</dbReference>
<dbReference type="Pfam" id="PF00793">
    <property type="entry name" value="DAHP_synth_1"/>
    <property type="match status" value="1"/>
</dbReference>
<dbReference type="SUPFAM" id="SSF51569">
    <property type="entry name" value="Aldolase"/>
    <property type="match status" value="1"/>
</dbReference>
<sequence>MAQKIIRVGDIEIANDKPMVLFGGMNVLESRDMAMQVCEEYVKVTEKLGIPYVFKASFDKANRSSVTSYRGPGLEEGMRIFQDIKQAFGVPIITDVHEPDQAAVVAEVCDIIQLPAFLSRQTDLVVAMAKTNAVINIKKAQFLAPQEMKHILNKCVEAGNDQLILCERGSSFGYNNLVVDMLGFGIMKQFEYPVFFDVTHSLQMPGGRSDSAGGRRAQVTDLAKAGMSQSLAGLFLEAHPDPDNAKCDGPCALRLDKLEPFLAQLKALDELVKSFPTVETA</sequence>
<name>KDSA_PSEPF</name>
<keyword id="KW-0963">Cytoplasm</keyword>
<keyword id="KW-0448">Lipopolysaccharide biosynthesis</keyword>
<keyword id="KW-0808">Transferase</keyword>
<protein>
    <recommendedName>
        <fullName evidence="1">2-dehydro-3-deoxyphosphooctonate aldolase</fullName>
        <ecNumber evidence="1">2.5.1.55</ecNumber>
    </recommendedName>
    <alternativeName>
        <fullName evidence="1">3-deoxy-D-manno-octulosonic acid 8-phosphate synthase</fullName>
    </alternativeName>
    <alternativeName>
        <fullName evidence="1">KDO-8-phosphate synthase</fullName>
        <shortName evidence="1">KDO 8-P synthase</shortName>
        <shortName evidence="1">KDOPS</shortName>
    </alternativeName>
    <alternativeName>
        <fullName evidence="1">Phospho-2-dehydro-3-deoxyoctonate aldolase</fullName>
    </alternativeName>
</protein>
<reference key="1">
    <citation type="journal article" date="2009" name="Genome Biol.">
        <title>Genomic and genetic analyses of diversity and plant interactions of Pseudomonas fluorescens.</title>
        <authorList>
            <person name="Silby M.W."/>
            <person name="Cerdeno-Tarraga A.M."/>
            <person name="Vernikos G.S."/>
            <person name="Giddens S.R."/>
            <person name="Jackson R.W."/>
            <person name="Preston G.M."/>
            <person name="Zhang X.-X."/>
            <person name="Moon C.D."/>
            <person name="Gehrig S.M."/>
            <person name="Godfrey S.A.C."/>
            <person name="Knight C.G."/>
            <person name="Malone J.G."/>
            <person name="Robinson Z."/>
            <person name="Spiers A.J."/>
            <person name="Harris S."/>
            <person name="Challis G.L."/>
            <person name="Yaxley A.M."/>
            <person name="Harris D."/>
            <person name="Seeger K."/>
            <person name="Murphy L."/>
            <person name="Rutter S."/>
            <person name="Squares R."/>
            <person name="Quail M.A."/>
            <person name="Saunders E."/>
            <person name="Mavromatis K."/>
            <person name="Brettin T.S."/>
            <person name="Bentley S.D."/>
            <person name="Hothersall J."/>
            <person name="Stephens E."/>
            <person name="Thomas C.M."/>
            <person name="Parkhill J."/>
            <person name="Levy S.B."/>
            <person name="Rainey P.B."/>
            <person name="Thomson N.R."/>
        </authorList>
    </citation>
    <scope>NUCLEOTIDE SEQUENCE [LARGE SCALE GENOMIC DNA]</scope>
    <source>
        <strain>Pf0-1</strain>
    </source>
</reference>
<feature type="chain" id="PRO_0000304473" description="2-dehydro-3-deoxyphosphooctonate aldolase">
    <location>
        <begin position="1"/>
        <end position="281"/>
    </location>
</feature>
<accession>Q3KH93</accession>